<comment type="function">
    <text evidence="1">Regulatory subunit of a potassium efflux system that confers protection against electrophiles. Required for full activity of KefB.</text>
</comment>
<comment type="catalytic activity">
    <reaction evidence="1">
        <text>a quinone + NADH + H(+) = a quinol + NAD(+)</text>
        <dbReference type="Rhea" id="RHEA:46160"/>
        <dbReference type="ChEBI" id="CHEBI:15378"/>
        <dbReference type="ChEBI" id="CHEBI:24646"/>
        <dbReference type="ChEBI" id="CHEBI:57540"/>
        <dbReference type="ChEBI" id="CHEBI:57945"/>
        <dbReference type="ChEBI" id="CHEBI:132124"/>
        <dbReference type="EC" id="1.6.5.2"/>
    </reaction>
</comment>
<comment type="catalytic activity">
    <reaction evidence="1">
        <text>a quinone + NADPH + H(+) = a quinol + NADP(+)</text>
        <dbReference type="Rhea" id="RHEA:46164"/>
        <dbReference type="ChEBI" id="CHEBI:15378"/>
        <dbReference type="ChEBI" id="CHEBI:24646"/>
        <dbReference type="ChEBI" id="CHEBI:57783"/>
        <dbReference type="ChEBI" id="CHEBI:58349"/>
        <dbReference type="ChEBI" id="CHEBI:132124"/>
        <dbReference type="EC" id="1.6.5.2"/>
    </reaction>
</comment>
<comment type="subunit">
    <text evidence="1">Interacts with KefB.</text>
</comment>
<comment type="subcellular location">
    <subcellularLocation>
        <location evidence="1">Cell inner membrane</location>
        <topology evidence="1">Peripheral membrane protein</topology>
        <orientation evidence="1">Cytoplasmic side</orientation>
    </subcellularLocation>
</comment>
<comment type="similarity">
    <text evidence="1">Belongs to the NAD(P)H dehydrogenase (quinone) family. KefG subfamily.</text>
</comment>
<sequence>MSQPAKVLLLYAHPESQDSVANRVLLKPAIQHNNVTVHDLYARYPDFFIDTPYEQALLREHDVIVFQHPLYTYSCPALLKEWLDRVLSRGFASGPGGNQLVGKYWRSVITTGEPESAYRYDALNRYPMSDVLRPFELTAAMCRMHWMPPIIVYWARRQSPQTLASHAKAYGEWLANPVSAGGY</sequence>
<gene>
    <name evidence="1" type="primary">kefG</name>
    <name type="ordered locus">SNSL254_A3728</name>
</gene>
<name>KEFG_SALNS</name>
<protein>
    <recommendedName>
        <fullName evidence="1">Glutathione-regulated potassium-efflux system ancillary protein KefG</fullName>
    </recommendedName>
    <alternativeName>
        <fullName evidence="1">Putative quinone oxidoreductase KefG</fullName>
        <ecNumber evidence="1">1.6.5.2</ecNumber>
    </alternativeName>
</protein>
<proteinExistence type="inferred from homology"/>
<reference key="1">
    <citation type="journal article" date="2011" name="J. Bacteriol.">
        <title>Comparative genomics of 28 Salmonella enterica isolates: evidence for CRISPR-mediated adaptive sublineage evolution.</title>
        <authorList>
            <person name="Fricke W.F."/>
            <person name="Mammel M.K."/>
            <person name="McDermott P.F."/>
            <person name="Tartera C."/>
            <person name="White D.G."/>
            <person name="Leclerc J.E."/>
            <person name="Ravel J."/>
            <person name="Cebula T.A."/>
        </authorList>
    </citation>
    <scope>NUCLEOTIDE SEQUENCE [LARGE SCALE GENOMIC DNA]</scope>
    <source>
        <strain>SL254</strain>
    </source>
</reference>
<feature type="chain" id="PRO_1000145586" description="Glutathione-regulated potassium-efflux system ancillary protein KefG">
    <location>
        <begin position="1"/>
        <end position="183"/>
    </location>
</feature>
<dbReference type="EC" id="1.6.5.2" evidence="1"/>
<dbReference type="EMBL" id="CP001113">
    <property type="protein sequence ID" value="ACF65063.1"/>
    <property type="molecule type" value="Genomic_DNA"/>
</dbReference>
<dbReference type="RefSeq" id="WP_000081820.1">
    <property type="nucleotide sequence ID" value="NZ_CCMR01000004.1"/>
</dbReference>
<dbReference type="SMR" id="B4SUV8"/>
<dbReference type="KEGG" id="see:SNSL254_A3728"/>
<dbReference type="HOGENOM" id="CLU_058643_0_1_6"/>
<dbReference type="Proteomes" id="UP000008824">
    <property type="component" value="Chromosome"/>
</dbReference>
<dbReference type="GO" id="GO:0005886">
    <property type="term" value="C:plasma membrane"/>
    <property type="evidence" value="ECO:0007669"/>
    <property type="project" value="UniProtKB-SubCell"/>
</dbReference>
<dbReference type="GO" id="GO:0009055">
    <property type="term" value="F:electron transfer activity"/>
    <property type="evidence" value="ECO:0007669"/>
    <property type="project" value="TreeGrafter"/>
</dbReference>
<dbReference type="GO" id="GO:0010181">
    <property type="term" value="F:FMN binding"/>
    <property type="evidence" value="ECO:0007669"/>
    <property type="project" value="TreeGrafter"/>
</dbReference>
<dbReference type="GO" id="GO:0050136">
    <property type="term" value="F:NADH:ubiquinone reductase (non-electrogenic) activity"/>
    <property type="evidence" value="ECO:0007669"/>
    <property type="project" value="RHEA"/>
</dbReference>
<dbReference type="GO" id="GO:0008753">
    <property type="term" value="F:NADPH dehydrogenase (quinone) activity"/>
    <property type="evidence" value="ECO:0007669"/>
    <property type="project" value="RHEA"/>
</dbReference>
<dbReference type="GO" id="GO:1901381">
    <property type="term" value="P:positive regulation of potassium ion transmembrane transport"/>
    <property type="evidence" value="ECO:0007669"/>
    <property type="project" value="UniProtKB-UniRule"/>
</dbReference>
<dbReference type="GO" id="GO:0006813">
    <property type="term" value="P:potassium ion transport"/>
    <property type="evidence" value="ECO:0007669"/>
    <property type="project" value="InterPro"/>
</dbReference>
<dbReference type="FunFam" id="3.40.50.360:FF:000013">
    <property type="entry name" value="Glutathione-regulated potassium-efflux system ancillary protein KefG"/>
    <property type="match status" value="1"/>
</dbReference>
<dbReference type="Gene3D" id="3.40.50.360">
    <property type="match status" value="1"/>
</dbReference>
<dbReference type="HAMAP" id="MF_01415">
    <property type="entry name" value="K_H_efflux_KefG"/>
    <property type="match status" value="1"/>
</dbReference>
<dbReference type="InterPro" id="IPR003680">
    <property type="entry name" value="Flavodoxin_fold"/>
</dbReference>
<dbReference type="InterPro" id="IPR029039">
    <property type="entry name" value="Flavoprotein-like_sf"/>
</dbReference>
<dbReference type="InterPro" id="IPR023947">
    <property type="entry name" value="K_H_efflux_KefG"/>
</dbReference>
<dbReference type="InterPro" id="IPR046980">
    <property type="entry name" value="KefG/KefF"/>
</dbReference>
<dbReference type="NCBIfam" id="NF003430">
    <property type="entry name" value="PRK04930.1"/>
    <property type="match status" value="1"/>
</dbReference>
<dbReference type="PANTHER" id="PTHR47307">
    <property type="entry name" value="GLUTATHIONE-REGULATED POTASSIUM-EFFLUX SYSTEM ANCILLARY PROTEIN KEFG"/>
    <property type="match status" value="1"/>
</dbReference>
<dbReference type="PANTHER" id="PTHR47307:SF1">
    <property type="entry name" value="GLUTATHIONE-REGULATED POTASSIUM-EFFLUX SYSTEM ANCILLARY PROTEIN KEFG"/>
    <property type="match status" value="1"/>
</dbReference>
<dbReference type="Pfam" id="PF02525">
    <property type="entry name" value="Flavodoxin_2"/>
    <property type="match status" value="1"/>
</dbReference>
<dbReference type="SUPFAM" id="SSF52218">
    <property type="entry name" value="Flavoproteins"/>
    <property type="match status" value="1"/>
</dbReference>
<accession>B4SUV8</accession>
<organism>
    <name type="scientific">Salmonella newport (strain SL254)</name>
    <dbReference type="NCBI Taxonomy" id="423368"/>
    <lineage>
        <taxon>Bacteria</taxon>
        <taxon>Pseudomonadati</taxon>
        <taxon>Pseudomonadota</taxon>
        <taxon>Gammaproteobacteria</taxon>
        <taxon>Enterobacterales</taxon>
        <taxon>Enterobacteriaceae</taxon>
        <taxon>Salmonella</taxon>
    </lineage>
</organism>
<evidence type="ECO:0000255" key="1">
    <source>
        <dbReference type="HAMAP-Rule" id="MF_01415"/>
    </source>
</evidence>
<keyword id="KW-0997">Cell inner membrane</keyword>
<keyword id="KW-1003">Cell membrane</keyword>
<keyword id="KW-0472">Membrane</keyword>
<keyword id="KW-0520">NAD</keyword>
<keyword id="KW-0560">Oxidoreductase</keyword>